<name>UBIG_ALKEH</name>
<evidence type="ECO:0000255" key="1">
    <source>
        <dbReference type="HAMAP-Rule" id="MF_00472"/>
    </source>
</evidence>
<protein>
    <recommendedName>
        <fullName evidence="1">Ubiquinone biosynthesis O-methyltransferase</fullName>
    </recommendedName>
    <alternativeName>
        <fullName evidence="1">2-polyprenyl-6-hydroxyphenol methylase</fullName>
        <ecNumber evidence="1">2.1.1.222</ecNumber>
    </alternativeName>
    <alternativeName>
        <fullName evidence="1">3-demethylubiquinone 3-O-methyltransferase</fullName>
        <ecNumber evidence="1">2.1.1.64</ecNumber>
    </alternativeName>
</protein>
<organism>
    <name type="scientific">Alkalilimnicola ehrlichii (strain ATCC BAA-1101 / DSM 17681 / MLHE-1)</name>
    <dbReference type="NCBI Taxonomy" id="187272"/>
    <lineage>
        <taxon>Bacteria</taxon>
        <taxon>Pseudomonadati</taxon>
        <taxon>Pseudomonadota</taxon>
        <taxon>Gammaproteobacteria</taxon>
        <taxon>Chromatiales</taxon>
        <taxon>Ectothiorhodospiraceae</taxon>
        <taxon>Alkalilimnicola</taxon>
    </lineage>
</organism>
<proteinExistence type="inferred from homology"/>
<dbReference type="EC" id="2.1.1.222" evidence="1"/>
<dbReference type="EC" id="2.1.1.64" evidence="1"/>
<dbReference type="EMBL" id="CP000453">
    <property type="protein sequence ID" value="ABI56264.1"/>
    <property type="molecule type" value="Genomic_DNA"/>
</dbReference>
<dbReference type="RefSeq" id="WP_011628659.1">
    <property type="nucleotide sequence ID" value="NC_008340.1"/>
</dbReference>
<dbReference type="SMR" id="Q0AA73"/>
<dbReference type="KEGG" id="aeh:Mlg_0910"/>
<dbReference type="eggNOG" id="COG2227">
    <property type="taxonomic scope" value="Bacteria"/>
</dbReference>
<dbReference type="HOGENOM" id="CLU_042432_5_0_6"/>
<dbReference type="OrthoDB" id="9801538at2"/>
<dbReference type="UniPathway" id="UPA00232"/>
<dbReference type="Proteomes" id="UP000001962">
    <property type="component" value="Chromosome"/>
</dbReference>
<dbReference type="GO" id="GO:0102208">
    <property type="term" value="F:2-polyprenyl-6-hydroxyphenol methylase activity"/>
    <property type="evidence" value="ECO:0007669"/>
    <property type="project" value="UniProtKB-EC"/>
</dbReference>
<dbReference type="GO" id="GO:0061542">
    <property type="term" value="F:3-demethylubiquinol 3-O-methyltransferase activity"/>
    <property type="evidence" value="ECO:0007669"/>
    <property type="project" value="UniProtKB-UniRule"/>
</dbReference>
<dbReference type="GO" id="GO:0010420">
    <property type="term" value="F:polyprenyldihydroxybenzoate methyltransferase activity"/>
    <property type="evidence" value="ECO:0007669"/>
    <property type="project" value="InterPro"/>
</dbReference>
<dbReference type="GO" id="GO:0032259">
    <property type="term" value="P:methylation"/>
    <property type="evidence" value="ECO:0007669"/>
    <property type="project" value="UniProtKB-KW"/>
</dbReference>
<dbReference type="CDD" id="cd02440">
    <property type="entry name" value="AdoMet_MTases"/>
    <property type="match status" value="1"/>
</dbReference>
<dbReference type="FunFam" id="3.40.50.150:FF:000028">
    <property type="entry name" value="Ubiquinone biosynthesis O-methyltransferase"/>
    <property type="match status" value="1"/>
</dbReference>
<dbReference type="Gene3D" id="3.40.50.150">
    <property type="entry name" value="Vaccinia Virus protein VP39"/>
    <property type="match status" value="1"/>
</dbReference>
<dbReference type="HAMAP" id="MF_00472">
    <property type="entry name" value="UbiG"/>
    <property type="match status" value="1"/>
</dbReference>
<dbReference type="InterPro" id="IPR029063">
    <property type="entry name" value="SAM-dependent_MTases_sf"/>
</dbReference>
<dbReference type="InterPro" id="IPR010233">
    <property type="entry name" value="UbiG_MeTrfase"/>
</dbReference>
<dbReference type="NCBIfam" id="TIGR01983">
    <property type="entry name" value="UbiG"/>
    <property type="match status" value="1"/>
</dbReference>
<dbReference type="PANTHER" id="PTHR43464">
    <property type="entry name" value="METHYLTRANSFERASE"/>
    <property type="match status" value="1"/>
</dbReference>
<dbReference type="PANTHER" id="PTHR43464:SF19">
    <property type="entry name" value="UBIQUINONE BIOSYNTHESIS O-METHYLTRANSFERASE, MITOCHONDRIAL"/>
    <property type="match status" value="1"/>
</dbReference>
<dbReference type="Pfam" id="PF13489">
    <property type="entry name" value="Methyltransf_23"/>
    <property type="match status" value="1"/>
</dbReference>
<dbReference type="SUPFAM" id="SSF53335">
    <property type="entry name" value="S-adenosyl-L-methionine-dependent methyltransferases"/>
    <property type="match status" value="1"/>
</dbReference>
<comment type="function">
    <text evidence="1">O-methyltransferase that catalyzes the 2 O-methylation steps in the ubiquinone biosynthetic pathway.</text>
</comment>
<comment type="catalytic activity">
    <reaction evidence="1">
        <text>a 3-demethylubiquinol + S-adenosyl-L-methionine = a ubiquinol + S-adenosyl-L-homocysteine + H(+)</text>
        <dbReference type="Rhea" id="RHEA:44380"/>
        <dbReference type="Rhea" id="RHEA-COMP:9566"/>
        <dbReference type="Rhea" id="RHEA-COMP:10914"/>
        <dbReference type="ChEBI" id="CHEBI:15378"/>
        <dbReference type="ChEBI" id="CHEBI:17976"/>
        <dbReference type="ChEBI" id="CHEBI:57856"/>
        <dbReference type="ChEBI" id="CHEBI:59789"/>
        <dbReference type="ChEBI" id="CHEBI:84422"/>
        <dbReference type="EC" id="2.1.1.64"/>
    </reaction>
</comment>
<comment type="catalytic activity">
    <reaction evidence="1">
        <text>a 3-(all-trans-polyprenyl)benzene-1,2-diol + S-adenosyl-L-methionine = a 2-methoxy-6-(all-trans-polyprenyl)phenol + S-adenosyl-L-homocysteine + H(+)</text>
        <dbReference type="Rhea" id="RHEA:31411"/>
        <dbReference type="Rhea" id="RHEA-COMP:9550"/>
        <dbReference type="Rhea" id="RHEA-COMP:9551"/>
        <dbReference type="ChEBI" id="CHEBI:15378"/>
        <dbReference type="ChEBI" id="CHEBI:57856"/>
        <dbReference type="ChEBI" id="CHEBI:59789"/>
        <dbReference type="ChEBI" id="CHEBI:62729"/>
        <dbReference type="ChEBI" id="CHEBI:62731"/>
        <dbReference type="EC" id="2.1.1.222"/>
    </reaction>
</comment>
<comment type="pathway">
    <text evidence="1">Cofactor biosynthesis; ubiquinone biosynthesis.</text>
</comment>
<comment type="similarity">
    <text evidence="1">Belongs to the methyltransferase superfamily. UbiG/COQ3 family.</text>
</comment>
<gene>
    <name evidence="1" type="primary">ubiG</name>
    <name type="ordered locus">Mlg_0910</name>
</gene>
<reference key="1">
    <citation type="submission" date="2006-08" db="EMBL/GenBank/DDBJ databases">
        <title>Complete sequence of Alkalilimnicola ehrilichei MLHE-1.</title>
        <authorList>
            <person name="Copeland A."/>
            <person name="Lucas S."/>
            <person name="Lapidus A."/>
            <person name="Barry K."/>
            <person name="Detter J.C."/>
            <person name="Glavina del Rio T."/>
            <person name="Hammon N."/>
            <person name="Israni S."/>
            <person name="Dalin E."/>
            <person name="Tice H."/>
            <person name="Pitluck S."/>
            <person name="Sims D."/>
            <person name="Brettin T."/>
            <person name="Bruce D."/>
            <person name="Han C."/>
            <person name="Tapia R."/>
            <person name="Gilna P."/>
            <person name="Schmutz J."/>
            <person name="Larimer F."/>
            <person name="Land M."/>
            <person name="Hauser L."/>
            <person name="Kyrpides N."/>
            <person name="Mikhailova N."/>
            <person name="Oremland R.S."/>
            <person name="Hoeft S.E."/>
            <person name="Switzer-Blum J."/>
            <person name="Kulp T."/>
            <person name="King G."/>
            <person name="Tabita R."/>
            <person name="Witte B."/>
            <person name="Santini J.M."/>
            <person name="Basu P."/>
            <person name="Hollibaugh J.T."/>
            <person name="Xie G."/>
            <person name="Stolz J.F."/>
            <person name="Richardson P."/>
        </authorList>
    </citation>
    <scope>NUCLEOTIDE SEQUENCE [LARGE SCALE GENOMIC DNA]</scope>
    <source>
        <strain>ATCC BAA-1101 / DSM 17681 / MLHE-1</strain>
    </source>
</reference>
<accession>Q0AA73</accession>
<sequence>MTDPATDTTRRNVHDHEVAKFDAAASRWWDPQGECKPLHDINPLRLDYVAQCLGGLEGRRILDVGCGGGLLAEGMARRGAEVTGIDMSKAALQVARLHALEMEVEVAYRQITVEELADSDEPRFDAVTCLEMLEHVPDPASAVHACARLVKPGGHVIFSTLNRNPKSYLFAILGAEYLLQLLPKGTHDWQQFIRPSELDRWAREADLVLRSMKGLTYNPLNQRYKLTDDTSVNYLAHYQHSPARAGS</sequence>
<feature type="chain" id="PRO_1000013888" description="Ubiquinone biosynthesis O-methyltransferase">
    <location>
        <begin position="1"/>
        <end position="247"/>
    </location>
</feature>
<feature type="binding site" evidence="1">
    <location>
        <position position="45"/>
    </location>
    <ligand>
        <name>S-adenosyl-L-methionine</name>
        <dbReference type="ChEBI" id="CHEBI:59789"/>
    </ligand>
</feature>
<feature type="binding site" evidence="1">
    <location>
        <position position="65"/>
    </location>
    <ligand>
        <name>S-adenosyl-L-methionine</name>
        <dbReference type="ChEBI" id="CHEBI:59789"/>
    </ligand>
</feature>
<feature type="binding site" evidence="1">
    <location>
        <position position="86"/>
    </location>
    <ligand>
        <name>S-adenosyl-L-methionine</name>
        <dbReference type="ChEBI" id="CHEBI:59789"/>
    </ligand>
</feature>
<feature type="binding site" evidence="1">
    <location>
        <position position="130"/>
    </location>
    <ligand>
        <name>S-adenosyl-L-methionine</name>
        <dbReference type="ChEBI" id="CHEBI:59789"/>
    </ligand>
</feature>
<keyword id="KW-0489">Methyltransferase</keyword>
<keyword id="KW-1185">Reference proteome</keyword>
<keyword id="KW-0949">S-adenosyl-L-methionine</keyword>
<keyword id="KW-0808">Transferase</keyword>
<keyword id="KW-0831">Ubiquinone biosynthesis</keyword>